<gene>
    <name evidence="1" type="primary">mraY</name>
    <name type="ordered locus">XCC0723</name>
</gene>
<evidence type="ECO:0000255" key="1">
    <source>
        <dbReference type="HAMAP-Rule" id="MF_00038"/>
    </source>
</evidence>
<keyword id="KW-0131">Cell cycle</keyword>
<keyword id="KW-0132">Cell division</keyword>
<keyword id="KW-0997">Cell inner membrane</keyword>
<keyword id="KW-1003">Cell membrane</keyword>
<keyword id="KW-0133">Cell shape</keyword>
<keyword id="KW-0961">Cell wall biogenesis/degradation</keyword>
<keyword id="KW-0460">Magnesium</keyword>
<keyword id="KW-0472">Membrane</keyword>
<keyword id="KW-0479">Metal-binding</keyword>
<keyword id="KW-0573">Peptidoglycan synthesis</keyword>
<keyword id="KW-1185">Reference proteome</keyword>
<keyword id="KW-0808">Transferase</keyword>
<keyword id="KW-0812">Transmembrane</keyword>
<keyword id="KW-1133">Transmembrane helix</keyword>
<feature type="chain" id="PRO_0000108931" description="Phospho-N-acetylmuramoyl-pentapeptide-transferase">
    <location>
        <begin position="1"/>
        <end position="361"/>
    </location>
</feature>
<feature type="transmembrane region" description="Helical" evidence="1">
    <location>
        <begin position="25"/>
        <end position="45"/>
    </location>
</feature>
<feature type="transmembrane region" description="Helical" evidence="1">
    <location>
        <begin position="73"/>
        <end position="93"/>
    </location>
</feature>
<feature type="transmembrane region" description="Helical" evidence="1">
    <location>
        <begin position="98"/>
        <end position="118"/>
    </location>
</feature>
<feature type="transmembrane region" description="Helical" evidence="1">
    <location>
        <begin position="139"/>
        <end position="159"/>
    </location>
</feature>
<feature type="transmembrane region" description="Helical" evidence="1">
    <location>
        <begin position="168"/>
        <end position="188"/>
    </location>
</feature>
<feature type="transmembrane region" description="Helical" evidence="1">
    <location>
        <begin position="200"/>
        <end position="220"/>
    </location>
</feature>
<feature type="transmembrane region" description="Helical" evidence="1">
    <location>
        <begin position="237"/>
        <end position="257"/>
    </location>
</feature>
<feature type="transmembrane region" description="Helical" evidence="1">
    <location>
        <begin position="264"/>
        <end position="284"/>
    </location>
</feature>
<feature type="transmembrane region" description="Helical" evidence="1">
    <location>
        <begin position="289"/>
        <end position="309"/>
    </location>
</feature>
<feature type="transmembrane region" description="Helical" evidence="1">
    <location>
        <begin position="339"/>
        <end position="359"/>
    </location>
</feature>
<comment type="function">
    <text evidence="1">Catalyzes the initial step of the lipid cycle reactions in the biosynthesis of the cell wall peptidoglycan: transfers peptidoglycan precursor phospho-MurNAc-pentapeptide from UDP-MurNAc-pentapeptide onto the lipid carrier undecaprenyl phosphate, yielding undecaprenyl-pyrophosphoryl-MurNAc-pentapeptide, known as lipid I.</text>
</comment>
<comment type="catalytic activity">
    <reaction evidence="1">
        <text>UDP-N-acetyl-alpha-D-muramoyl-L-alanyl-gamma-D-glutamyl-meso-2,6-diaminopimeloyl-D-alanyl-D-alanine + di-trans,octa-cis-undecaprenyl phosphate = di-trans,octa-cis-undecaprenyl diphospho-N-acetyl-alpha-D-muramoyl-L-alanyl-D-glutamyl-meso-2,6-diaminopimeloyl-D-alanyl-D-alanine + UMP</text>
        <dbReference type="Rhea" id="RHEA:28386"/>
        <dbReference type="ChEBI" id="CHEBI:57865"/>
        <dbReference type="ChEBI" id="CHEBI:60392"/>
        <dbReference type="ChEBI" id="CHEBI:61386"/>
        <dbReference type="ChEBI" id="CHEBI:61387"/>
        <dbReference type="EC" id="2.7.8.13"/>
    </reaction>
</comment>
<comment type="cofactor">
    <cofactor evidence="1">
        <name>Mg(2+)</name>
        <dbReference type="ChEBI" id="CHEBI:18420"/>
    </cofactor>
</comment>
<comment type="pathway">
    <text evidence="1">Cell wall biogenesis; peptidoglycan biosynthesis.</text>
</comment>
<comment type="subcellular location">
    <subcellularLocation>
        <location evidence="1">Cell inner membrane</location>
        <topology evidence="1">Multi-pass membrane protein</topology>
    </subcellularLocation>
</comment>
<comment type="similarity">
    <text evidence="1">Belongs to the glycosyltransferase 4 family. MraY subfamily.</text>
</comment>
<accession>Q8PCK2</accession>
<reference key="1">
    <citation type="journal article" date="2002" name="Nature">
        <title>Comparison of the genomes of two Xanthomonas pathogens with differing host specificities.</title>
        <authorList>
            <person name="da Silva A.C.R."/>
            <person name="Ferro J.A."/>
            <person name="Reinach F.C."/>
            <person name="Farah C.S."/>
            <person name="Furlan L.R."/>
            <person name="Quaggio R.B."/>
            <person name="Monteiro-Vitorello C.B."/>
            <person name="Van Sluys M.A."/>
            <person name="Almeida N.F. Jr."/>
            <person name="Alves L.M.C."/>
            <person name="do Amaral A.M."/>
            <person name="Bertolini M.C."/>
            <person name="Camargo L.E.A."/>
            <person name="Camarotte G."/>
            <person name="Cannavan F."/>
            <person name="Cardozo J."/>
            <person name="Chambergo F."/>
            <person name="Ciapina L.P."/>
            <person name="Cicarelli R.M.B."/>
            <person name="Coutinho L.L."/>
            <person name="Cursino-Santos J.R."/>
            <person name="El-Dorry H."/>
            <person name="Faria J.B."/>
            <person name="Ferreira A.J.S."/>
            <person name="Ferreira R.C.C."/>
            <person name="Ferro M.I.T."/>
            <person name="Formighieri E.F."/>
            <person name="Franco M.C."/>
            <person name="Greggio C.C."/>
            <person name="Gruber A."/>
            <person name="Katsuyama A.M."/>
            <person name="Kishi L.T."/>
            <person name="Leite R.P."/>
            <person name="Lemos E.G.M."/>
            <person name="Lemos M.V.F."/>
            <person name="Locali E.C."/>
            <person name="Machado M.A."/>
            <person name="Madeira A.M.B.N."/>
            <person name="Martinez-Rossi N.M."/>
            <person name="Martins E.C."/>
            <person name="Meidanis J."/>
            <person name="Menck C.F.M."/>
            <person name="Miyaki C.Y."/>
            <person name="Moon D.H."/>
            <person name="Moreira L.M."/>
            <person name="Novo M.T.M."/>
            <person name="Okura V.K."/>
            <person name="Oliveira M.C."/>
            <person name="Oliveira V.R."/>
            <person name="Pereira H.A."/>
            <person name="Rossi A."/>
            <person name="Sena J.A.D."/>
            <person name="Silva C."/>
            <person name="de Souza R.F."/>
            <person name="Spinola L.A.F."/>
            <person name="Takita M.A."/>
            <person name="Tamura R.E."/>
            <person name="Teixeira E.C."/>
            <person name="Tezza R.I.D."/>
            <person name="Trindade dos Santos M."/>
            <person name="Truffi D."/>
            <person name="Tsai S.M."/>
            <person name="White F.F."/>
            <person name="Setubal J.C."/>
            <person name="Kitajima J.P."/>
        </authorList>
    </citation>
    <scope>NUCLEOTIDE SEQUENCE [LARGE SCALE GENOMIC DNA]</scope>
    <source>
        <strain>ATCC 33913 / DSM 3586 / NCPPB 528 / LMG 568 / P 25</strain>
    </source>
</reference>
<protein>
    <recommendedName>
        <fullName evidence="1">Phospho-N-acetylmuramoyl-pentapeptide-transferase</fullName>
        <ecNumber evidence="1">2.7.8.13</ecNumber>
    </recommendedName>
    <alternativeName>
        <fullName evidence="1">UDP-MurNAc-pentapeptide phosphotransferase</fullName>
    </alternativeName>
</protein>
<dbReference type="EC" id="2.7.8.13" evidence="1"/>
<dbReference type="EMBL" id="AE008922">
    <property type="protein sequence ID" value="AAM40038.1"/>
    <property type="molecule type" value="Genomic_DNA"/>
</dbReference>
<dbReference type="RefSeq" id="NP_636114.1">
    <property type="nucleotide sequence ID" value="NC_003902.1"/>
</dbReference>
<dbReference type="RefSeq" id="WP_011035960.1">
    <property type="nucleotide sequence ID" value="NC_003902.1"/>
</dbReference>
<dbReference type="SMR" id="Q8PCK2"/>
<dbReference type="STRING" id="190485.XCC0723"/>
<dbReference type="EnsemblBacteria" id="AAM40038">
    <property type="protein sequence ID" value="AAM40038"/>
    <property type="gene ID" value="XCC0723"/>
</dbReference>
<dbReference type="GeneID" id="58014710"/>
<dbReference type="KEGG" id="xcc:XCC0723"/>
<dbReference type="PATRIC" id="fig|190485.4.peg.787"/>
<dbReference type="eggNOG" id="COG0472">
    <property type="taxonomic scope" value="Bacteria"/>
</dbReference>
<dbReference type="HOGENOM" id="CLU_023982_0_0_6"/>
<dbReference type="OrthoDB" id="9805475at2"/>
<dbReference type="UniPathway" id="UPA00219"/>
<dbReference type="Proteomes" id="UP000001010">
    <property type="component" value="Chromosome"/>
</dbReference>
<dbReference type="GO" id="GO:0005886">
    <property type="term" value="C:plasma membrane"/>
    <property type="evidence" value="ECO:0000318"/>
    <property type="project" value="GO_Central"/>
</dbReference>
<dbReference type="GO" id="GO:0046872">
    <property type="term" value="F:metal ion binding"/>
    <property type="evidence" value="ECO:0007669"/>
    <property type="project" value="UniProtKB-KW"/>
</dbReference>
<dbReference type="GO" id="GO:0008963">
    <property type="term" value="F:phospho-N-acetylmuramoyl-pentapeptide-transferase activity"/>
    <property type="evidence" value="ECO:0000318"/>
    <property type="project" value="GO_Central"/>
</dbReference>
<dbReference type="GO" id="GO:0051992">
    <property type="term" value="F:UDP-N-acetylmuramoyl-L-alanyl-D-glutamyl-meso-2,6-diaminopimelyl-D-alanyl-D-alanine:undecaprenyl-phosphate transferase activity"/>
    <property type="evidence" value="ECO:0007669"/>
    <property type="project" value="RHEA"/>
</dbReference>
<dbReference type="GO" id="GO:0051301">
    <property type="term" value="P:cell division"/>
    <property type="evidence" value="ECO:0007669"/>
    <property type="project" value="UniProtKB-KW"/>
</dbReference>
<dbReference type="GO" id="GO:0044038">
    <property type="term" value="P:cell wall macromolecule biosynthetic process"/>
    <property type="evidence" value="ECO:0000318"/>
    <property type="project" value="GO_Central"/>
</dbReference>
<dbReference type="GO" id="GO:0071555">
    <property type="term" value="P:cell wall organization"/>
    <property type="evidence" value="ECO:0000318"/>
    <property type="project" value="GO_Central"/>
</dbReference>
<dbReference type="GO" id="GO:0009252">
    <property type="term" value="P:peptidoglycan biosynthetic process"/>
    <property type="evidence" value="ECO:0007669"/>
    <property type="project" value="UniProtKB-UniRule"/>
</dbReference>
<dbReference type="GO" id="GO:0008360">
    <property type="term" value="P:regulation of cell shape"/>
    <property type="evidence" value="ECO:0007669"/>
    <property type="project" value="UniProtKB-KW"/>
</dbReference>
<dbReference type="CDD" id="cd06852">
    <property type="entry name" value="GT_MraY"/>
    <property type="match status" value="1"/>
</dbReference>
<dbReference type="HAMAP" id="MF_00038">
    <property type="entry name" value="MraY"/>
    <property type="match status" value="1"/>
</dbReference>
<dbReference type="InterPro" id="IPR000715">
    <property type="entry name" value="Glycosyl_transferase_4"/>
</dbReference>
<dbReference type="InterPro" id="IPR003524">
    <property type="entry name" value="PNAcMuramoyl-5peptid_Trfase"/>
</dbReference>
<dbReference type="InterPro" id="IPR018480">
    <property type="entry name" value="PNAcMuramoyl-5peptid_Trfase_CS"/>
</dbReference>
<dbReference type="NCBIfam" id="TIGR00445">
    <property type="entry name" value="mraY"/>
    <property type="match status" value="1"/>
</dbReference>
<dbReference type="PANTHER" id="PTHR22926">
    <property type="entry name" value="PHOSPHO-N-ACETYLMURAMOYL-PENTAPEPTIDE-TRANSFERASE"/>
    <property type="match status" value="1"/>
</dbReference>
<dbReference type="PANTHER" id="PTHR22926:SF5">
    <property type="entry name" value="PHOSPHO-N-ACETYLMURAMOYL-PENTAPEPTIDE-TRANSFERASE HOMOLOG"/>
    <property type="match status" value="1"/>
</dbReference>
<dbReference type="Pfam" id="PF00953">
    <property type="entry name" value="Glycos_transf_4"/>
    <property type="match status" value="1"/>
</dbReference>
<dbReference type="PROSITE" id="PS01347">
    <property type="entry name" value="MRAY_1"/>
    <property type="match status" value="1"/>
</dbReference>
<dbReference type="PROSITE" id="PS01348">
    <property type="entry name" value="MRAY_2"/>
    <property type="match status" value="1"/>
</dbReference>
<organism>
    <name type="scientific">Xanthomonas campestris pv. campestris (strain ATCC 33913 / DSM 3586 / NCPPB 528 / LMG 568 / P 25)</name>
    <dbReference type="NCBI Taxonomy" id="190485"/>
    <lineage>
        <taxon>Bacteria</taxon>
        <taxon>Pseudomonadati</taxon>
        <taxon>Pseudomonadota</taxon>
        <taxon>Gammaproteobacteria</taxon>
        <taxon>Lysobacterales</taxon>
        <taxon>Lysobacteraceae</taxon>
        <taxon>Xanthomonas</taxon>
    </lineage>
</organism>
<proteinExistence type="inferred from homology"/>
<name>MRAY_XANCP</name>
<sequence length="361" mass="39607">MLLELARWLQQLESLFGLFNYLTFRGILAALTALFLSLWMGPAVIRKLAQFKGGQPIRQDGPQTHFSKAGTPTMGGSLILLTVTLSVLLWGDLRNRYVWLVLAVMICFGAIGWYDDWIKIVRRDPNGLKSRWKYLLQSIFGLAAGLFLYYTADVPAAITFYIPMFKAIALPLAGVSFVVIAYFWIVGFSNAVNLTDGLDGLAIMPTVLVACALGVFAYASGNVVFAEYLKIPLIPGAGELIIICSAIAGAGLGFLWFNTYPAMVFMGDIGALSLGAVLGTVAVIVRQELVLVIMGGVFVIETLSVMIQVASFKLTGKRVFRMAPIHHHFELKGWPEPRVIVRFWIISVVLVLIGLATLKVR</sequence>